<evidence type="ECO:0000255" key="1">
    <source>
        <dbReference type="HAMAP-Rule" id="MF_00471"/>
    </source>
</evidence>
<reference key="1">
    <citation type="submission" date="2002-12" db="EMBL/GenBank/DDBJ databases">
        <title>Complete genome sequence of Vibrio vulnificus CMCP6.</title>
        <authorList>
            <person name="Rhee J.H."/>
            <person name="Kim S.Y."/>
            <person name="Chung S.S."/>
            <person name="Kim J.J."/>
            <person name="Moon Y.H."/>
            <person name="Jeong H."/>
            <person name="Choy H.E."/>
        </authorList>
    </citation>
    <scope>NUCLEOTIDE SEQUENCE [LARGE SCALE GENOMIC DNA]</scope>
    <source>
        <strain>CMCP6</strain>
    </source>
</reference>
<proteinExistence type="inferred from homology"/>
<keyword id="KW-0963">Cytoplasm</keyword>
<gene>
    <name evidence="1" type="primary">rraA</name>
    <name type="ordered locus">VV1_1352</name>
</gene>
<accession>Q8DCP6</accession>
<protein>
    <recommendedName>
        <fullName evidence="1">Regulator of ribonuclease activity A</fullName>
    </recommendedName>
</protein>
<sequence length="173" mass="18730">MEYNTSALCDIYMDQVDVVEPMFSNFGGRASFAGQITTVKCFEDNALIRETLEQDGVGRVLLVDGGGSLRRALLDGELAAIAEENEWEGIVVYGCVREVDELEDMNIGIQALASIPVGAAMQGVGEVDVPVNFGGVTFLPEDYLYADTTGIILSQEPLSADLEEDEEEPELLD</sequence>
<feature type="chain" id="PRO_0000209645" description="Regulator of ribonuclease activity A">
    <location>
        <begin position="1"/>
        <end position="173"/>
    </location>
</feature>
<organism>
    <name type="scientific">Vibrio vulnificus (strain CMCP6)</name>
    <dbReference type="NCBI Taxonomy" id="216895"/>
    <lineage>
        <taxon>Bacteria</taxon>
        <taxon>Pseudomonadati</taxon>
        <taxon>Pseudomonadota</taxon>
        <taxon>Gammaproteobacteria</taxon>
        <taxon>Vibrionales</taxon>
        <taxon>Vibrionaceae</taxon>
        <taxon>Vibrio</taxon>
    </lineage>
</organism>
<comment type="function">
    <text evidence="1">Globally modulates RNA abundance by binding to RNase E (Rne) and regulating its endonucleolytic activity. Can modulate Rne action in a substrate-dependent manner by altering the composition of the degradosome. Modulates RNA-binding and helicase activities of the degradosome.</text>
</comment>
<comment type="subunit">
    <text evidence="1">Homotrimer. Binds to both RNA-binding sites in the C-terminal region of Rne and to RhlB.</text>
</comment>
<comment type="subcellular location">
    <subcellularLocation>
        <location evidence="1">Cytoplasm</location>
    </subcellularLocation>
</comment>
<comment type="similarity">
    <text evidence="1">Belongs to the RraA family.</text>
</comment>
<name>RRAA_VIBVU</name>
<dbReference type="EMBL" id="AE016795">
    <property type="protein sequence ID" value="AAO09804.2"/>
    <property type="molecule type" value="Genomic_DNA"/>
</dbReference>
<dbReference type="RefSeq" id="WP_011079329.1">
    <property type="nucleotide sequence ID" value="NC_004459.3"/>
</dbReference>
<dbReference type="SMR" id="Q8DCP6"/>
<dbReference type="KEGG" id="vvu:VV1_1352"/>
<dbReference type="HOGENOM" id="CLU_072626_4_0_6"/>
<dbReference type="Proteomes" id="UP000002275">
    <property type="component" value="Chromosome 1"/>
</dbReference>
<dbReference type="GO" id="GO:0005737">
    <property type="term" value="C:cytoplasm"/>
    <property type="evidence" value="ECO:0007669"/>
    <property type="project" value="UniProtKB-SubCell"/>
</dbReference>
<dbReference type="GO" id="GO:0060698">
    <property type="term" value="F:endoribonuclease inhibitor activity"/>
    <property type="evidence" value="ECO:0007669"/>
    <property type="project" value="UniProtKB-UniRule"/>
</dbReference>
<dbReference type="GO" id="GO:0019899">
    <property type="term" value="F:enzyme binding"/>
    <property type="evidence" value="ECO:0007669"/>
    <property type="project" value="UniProtKB-UniRule"/>
</dbReference>
<dbReference type="GO" id="GO:0051252">
    <property type="term" value="P:regulation of RNA metabolic process"/>
    <property type="evidence" value="ECO:0007669"/>
    <property type="project" value="InterPro"/>
</dbReference>
<dbReference type="CDD" id="cd16841">
    <property type="entry name" value="RraA_family"/>
    <property type="match status" value="1"/>
</dbReference>
<dbReference type="Gene3D" id="3.50.30.40">
    <property type="entry name" value="Ribonuclease E inhibitor RraA/RraA-like"/>
    <property type="match status" value="1"/>
</dbReference>
<dbReference type="HAMAP" id="MF_00471">
    <property type="entry name" value="RraA"/>
    <property type="match status" value="1"/>
</dbReference>
<dbReference type="InterPro" id="IPR010203">
    <property type="entry name" value="RraA"/>
</dbReference>
<dbReference type="InterPro" id="IPR005493">
    <property type="entry name" value="RraA/RraA-like"/>
</dbReference>
<dbReference type="InterPro" id="IPR036704">
    <property type="entry name" value="RraA/RraA-like_sf"/>
</dbReference>
<dbReference type="InterPro" id="IPR014339">
    <property type="entry name" value="RraA_gpbac"/>
</dbReference>
<dbReference type="NCBIfam" id="TIGR01935">
    <property type="entry name" value="NOT-MenG"/>
    <property type="match status" value="1"/>
</dbReference>
<dbReference type="NCBIfam" id="NF006875">
    <property type="entry name" value="PRK09372.1"/>
    <property type="match status" value="1"/>
</dbReference>
<dbReference type="NCBIfam" id="TIGR02998">
    <property type="entry name" value="RraA_entero"/>
    <property type="match status" value="1"/>
</dbReference>
<dbReference type="PANTHER" id="PTHR33254">
    <property type="entry name" value="4-HYDROXY-4-METHYL-2-OXOGLUTARATE ALDOLASE 3-RELATED"/>
    <property type="match status" value="1"/>
</dbReference>
<dbReference type="PANTHER" id="PTHR33254:SF29">
    <property type="entry name" value="REGULATOR OF RIBONUCLEASE ACTIVITY A"/>
    <property type="match status" value="1"/>
</dbReference>
<dbReference type="Pfam" id="PF03737">
    <property type="entry name" value="RraA-like"/>
    <property type="match status" value="1"/>
</dbReference>
<dbReference type="SUPFAM" id="SSF89562">
    <property type="entry name" value="RraA-like"/>
    <property type="match status" value="1"/>
</dbReference>